<name>TRP1_EUSSE</name>
<organism>
    <name type="scientific">Euschistus servus</name>
    <name type="common">Brown stink bug</name>
    <dbReference type="NCBI Taxonomy" id="756488"/>
    <lineage>
        <taxon>Eukaryota</taxon>
        <taxon>Metazoa</taxon>
        <taxon>Ecdysozoa</taxon>
        <taxon>Arthropoda</taxon>
        <taxon>Hexapoda</taxon>
        <taxon>Insecta</taxon>
        <taxon>Pterygota</taxon>
        <taxon>Neoptera</taxon>
        <taxon>Paraneoptera</taxon>
        <taxon>Hemiptera</taxon>
        <taxon>Heteroptera</taxon>
        <taxon>Panheteroptera</taxon>
        <taxon>Pentatomomorpha</taxon>
        <taxon>Pentatomoidea</taxon>
        <taxon>Pentatomidae</taxon>
        <taxon>Pentatominae</taxon>
        <taxon>Euschistus</taxon>
    </lineage>
</organism>
<dbReference type="GO" id="GO:0005576">
    <property type="term" value="C:extracellular region"/>
    <property type="evidence" value="ECO:0007005"/>
    <property type="project" value="UniProtKB"/>
</dbReference>
<dbReference type="GO" id="GO:0007218">
    <property type="term" value="P:neuropeptide signaling pathway"/>
    <property type="evidence" value="ECO:0007669"/>
    <property type="project" value="UniProtKB-KW"/>
</dbReference>
<proteinExistence type="evidence at protein level"/>
<sequence>GPSGFLGMR</sequence>
<evidence type="ECO:0000269" key="1">
    <source>
    </source>
</evidence>
<evidence type="ECO:0000303" key="2">
    <source>
    </source>
</evidence>
<evidence type="ECO:0000305" key="3"/>
<reference evidence="3" key="1">
    <citation type="journal article" date="2009" name="Peptides">
        <title>Neuropeptides in Heteroptera: identification of allatotropin-related peptide and tachykinin-related peptides using MALDI-TOF mass spectrometry.</title>
        <authorList>
            <person name="Neupert S."/>
            <person name="Russell W.K."/>
            <person name="Russell D.H."/>
            <person name="Lopez J.D. Jr."/>
            <person name="Predel R."/>
            <person name="Nachman R.J."/>
        </authorList>
    </citation>
    <scope>PROTEIN SEQUENCE</scope>
    <scope>SUBCELLULAR LOCATION</scope>
    <scope>TISSUE SPECIFICITY</scope>
    <scope>AMIDATION AT ARG-9</scope>
    <source>
        <tissue evidence="1">Antennal lobe</tissue>
    </source>
</reference>
<comment type="subcellular location">
    <subcellularLocation>
        <location evidence="1 3">Secreted</location>
    </subcellularLocation>
</comment>
<comment type="tissue specificity">
    <text evidence="1">Expressed in the antennal lobe (at protein level).</text>
</comment>
<keyword id="KW-0027">Amidation</keyword>
<keyword id="KW-0903">Direct protein sequencing</keyword>
<keyword id="KW-0527">Neuropeptide</keyword>
<keyword id="KW-0964">Secreted</keyword>
<accession>P86569</accession>
<feature type="peptide" id="PRO_0000395638" description="Tachykinin-related peptide 1" evidence="1">
    <location>
        <begin position="1"/>
        <end position="9"/>
    </location>
</feature>
<feature type="modified residue" description="Arginine amide" evidence="1">
    <location>
        <position position="9"/>
    </location>
</feature>
<protein>
    <recommendedName>
        <fullName evidence="2">Tachykinin-related peptide 1</fullName>
        <shortName evidence="2">TKRP-1</shortName>
    </recommendedName>
</protein>